<reference key="1">
    <citation type="journal article" date="2004" name="Nucleic Acids Res.">
        <title>The genome sequence of Bacillus cereus ATCC 10987 reveals metabolic adaptations and a large plasmid related to Bacillus anthracis pXO1.</title>
        <authorList>
            <person name="Rasko D.A."/>
            <person name="Ravel J."/>
            <person name="Oekstad O.A."/>
            <person name="Helgason E."/>
            <person name="Cer R.Z."/>
            <person name="Jiang L."/>
            <person name="Shores K.A."/>
            <person name="Fouts D.E."/>
            <person name="Tourasse N.J."/>
            <person name="Angiuoli S.V."/>
            <person name="Kolonay J.F."/>
            <person name="Nelson W.C."/>
            <person name="Kolstoe A.-B."/>
            <person name="Fraser C.M."/>
            <person name="Read T.D."/>
        </authorList>
    </citation>
    <scope>NUCLEOTIDE SEQUENCE [LARGE SCALE GENOMIC DNA]</scope>
    <source>
        <strain>ATCC 10987 / NRS 248</strain>
    </source>
</reference>
<accession>P62462</accession>
<feature type="chain" id="PRO_0000151089" description="Undecaprenyl-diphosphatase 2">
    <location>
        <begin position="1"/>
        <end position="263"/>
    </location>
</feature>
<feature type="transmembrane region" description="Helical" evidence="1">
    <location>
        <begin position="15"/>
        <end position="37"/>
    </location>
</feature>
<feature type="transmembrane region" description="Helical" evidence="1">
    <location>
        <begin position="42"/>
        <end position="62"/>
    </location>
</feature>
<feature type="transmembrane region" description="Helical" evidence="1">
    <location>
        <begin position="83"/>
        <end position="103"/>
    </location>
</feature>
<feature type="transmembrane region" description="Helical" evidence="1">
    <location>
        <begin position="106"/>
        <end position="126"/>
    </location>
</feature>
<feature type="transmembrane region" description="Helical" evidence="1">
    <location>
        <begin position="142"/>
        <end position="162"/>
    </location>
</feature>
<feature type="transmembrane region" description="Helical" evidence="1">
    <location>
        <begin position="183"/>
        <end position="203"/>
    </location>
</feature>
<feature type="transmembrane region" description="Helical" evidence="1">
    <location>
        <begin position="216"/>
        <end position="236"/>
    </location>
</feature>
<feature type="transmembrane region" description="Helical" evidence="1">
    <location>
        <begin position="242"/>
        <end position="262"/>
    </location>
</feature>
<evidence type="ECO:0000255" key="1">
    <source>
        <dbReference type="HAMAP-Rule" id="MF_01006"/>
    </source>
</evidence>
<gene>
    <name evidence="1" type="primary">uppP2</name>
    <name type="synonym">bacA2</name>
    <name type="synonym">upk2</name>
    <name type="ordered locus">BCE_1502</name>
</gene>
<keyword id="KW-0046">Antibiotic resistance</keyword>
<keyword id="KW-1003">Cell membrane</keyword>
<keyword id="KW-0133">Cell shape</keyword>
<keyword id="KW-0961">Cell wall biogenesis/degradation</keyword>
<keyword id="KW-0378">Hydrolase</keyword>
<keyword id="KW-0472">Membrane</keyword>
<keyword id="KW-0573">Peptidoglycan synthesis</keyword>
<keyword id="KW-0812">Transmembrane</keyword>
<keyword id="KW-1133">Transmembrane helix</keyword>
<organism>
    <name type="scientific">Bacillus cereus (strain ATCC 10987 / NRS 248)</name>
    <dbReference type="NCBI Taxonomy" id="222523"/>
    <lineage>
        <taxon>Bacteria</taxon>
        <taxon>Bacillati</taxon>
        <taxon>Bacillota</taxon>
        <taxon>Bacilli</taxon>
        <taxon>Bacillales</taxon>
        <taxon>Bacillaceae</taxon>
        <taxon>Bacillus</taxon>
        <taxon>Bacillus cereus group</taxon>
    </lineage>
</organism>
<sequence>MADWLIGIIMGAVEGLTEFLPVSSTGHMILTGHLLGFDDERAKVFEVVIQLGSILAVVVIFWKRLWSLVGIGKVTDGPSLNLLHIIIGMIPAGVLGVLFHSAIKEVLFGPGPVVISLVAGGILMIVAEKFSKPSTARTLDEITYKQAFTIGMFQCLALWPGFSRSGSTISGGLLARVSHTAAAEYTFILAVPMMVAASGLDLIKSWDILSAADIPLFATGFITAFVVAMLAIVSFLKLLSRVKLTPFAYYRFILAAVFYFFIM</sequence>
<protein>
    <recommendedName>
        <fullName evidence="1">Undecaprenyl-diphosphatase 2</fullName>
        <ecNumber evidence="1">3.6.1.27</ecNumber>
    </recommendedName>
    <alternativeName>
        <fullName evidence="1">Bacitracin resistance protein 2</fullName>
    </alternativeName>
    <alternativeName>
        <fullName evidence="1">Undecaprenyl pyrophosphate phosphatase 2</fullName>
    </alternativeName>
</protein>
<dbReference type="EC" id="3.6.1.27" evidence="1"/>
<dbReference type="EMBL" id="AE017194">
    <property type="protein sequence ID" value="AAS40431.1"/>
    <property type="molecule type" value="Genomic_DNA"/>
</dbReference>
<dbReference type="SMR" id="P62462"/>
<dbReference type="KEGG" id="bca:BCE_1502"/>
<dbReference type="HOGENOM" id="CLU_060296_2_0_9"/>
<dbReference type="Proteomes" id="UP000002527">
    <property type="component" value="Chromosome"/>
</dbReference>
<dbReference type="GO" id="GO:0005886">
    <property type="term" value="C:plasma membrane"/>
    <property type="evidence" value="ECO:0007669"/>
    <property type="project" value="UniProtKB-SubCell"/>
</dbReference>
<dbReference type="GO" id="GO:0050380">
    <property type="term" value="F:undecaprenyl-diphosphatase activity"/>
    <property type="evidence" value="ECO:0007669"/>
    <property type="project" value="UniProtKB-UniRule"/>
</dbReference>
<dbReference type="GO" id="GO:0071555">
    <property type="term" value="P:cell wall organization"/>
    <property type="evidence" value="ECO:0007669"/>
    <property type="project" value="UniProtKB-KW"/>
</dbReference>
<dbReference type="GO" id="GO:0009252">
    <property type="term" value="P:peptidoglycan biosynthetic process"/>
    <property type="evidence" value="ECO:0007669"/>
    <property type="project" value="UniProtKB-KW"/>
</dbReference>
<dbReference type="GO" id="GO:0008360">
    <property type="term" value="P:regulation of cell shape"/>
    <property type="evidence" value="ECO:0007669"/>
    <property type="project" value="UniProtKB-KW"/>
</dbReference>
<dbReference type="GO" id="GO:0046677">
    <property type="term" value="P:response to antibiotic"/>
    <property type="evidence" value="ECO:0007669"/>
    <property type="project" value="UniProtKB-UniRule"/>
</dbReference>
<dbReference type="HAMAP" id="MF_01006">
    <property type="entry name" value="Undec_diphosphatase"/>
    <property type="match status" value="1"/>
</dbReference>
<dbReference type="InterPro" id="IPR003824">
    <property type="entry name" value="UppP"/>
</dbReference>
<dbReference type="NCBIfam" id="NF001388">
    <property type="entry name" value="PRK00281.1-1"/>
    <property type="match status" value="1"/>
</dbReference>
<dbReference type="NCBIfam" id="NF001389">
    <property type="entry name" value="PRK00281.1-2"/>
    <property type="match status" value="1"/>
</dbReference>
<dbReference type="NCBIfam" id="NF001390">
    <property type="entry name" value="PRK00281.1-4"/>
    <property type="match status" value="1"/>
</dbReference>
<dbReference type="NCBIfam" id="TIGR00753">
    <property type="entry name" value="undec_PP_bacA"/>
    <property type="match status" value="1"/>
</dbReference>
<dbReference type="PANTHER" id="PTHR30622">
    <property type="entry name" value="UNDECAPRENYL-DIPHOSPHATASE"/>
    <property type="match status" value="1"/>
</dbReference>
<dbReference type="PANTHER" id="PTHR30622:SF3">
    <property type="entry name" value="UNDECAPRENYL-DIPHOSPHATASE"/>
    <property type="match status" value="1"/>
</dbReference>
<dbReference type="Pfam" id="PF02673">
    <property type="entry name" value="BacA"/>
    <property type="match status" value="1"/>
</dbReference>
<proteinExistence type="inferred from homology"/>
<comment type="function">
    <text evidence="1">Catalyzes the dephosphorylation of undecaprenyl diphosphate (UPP). Confers resistance to bacitracin.</text>
</comment>
<comment type="catalytic activity">
    <reaction evidence="1">
        <text>di-trans,octa-cis-undecaprenyl diphosphate + H2O = di-trans,octa-cis-undecaprenyl phosphate + phosphate + H(+)</text>
        <dbReference type="Rhea" id="RHEA:28094"/>
        <dbReference type="ChEBI" id="CHEBI:15377"/>
        <dbReference type="ChEBI" id="CHEBI:15378"/>
        <dbReference type="ChEBI" id="CHEBI:43474"/>
        <dbReference type="ChEBI" id="CHEBI:58405"/>
        <dbReference type="ChEBI" id="CHEBI:60392"/>
        <dbReference type="EC" id="3.6.1.27"/>
    </reaction>
</comment>
<comment type="subcellular location">
    <subcellularLocation>
        <location evidence="1">Cell membrane</location>
        <topology evidence="1">Multi-pass membrane protein</topology>
    </subcellularLocation>
</comment>
<comment type="miscellaneous">
    <text>Bacitracin is thought to be involved in the inhibition of peptidoglycan synthesis by sequestering undecaprenyl diphosphate, thereby reducing the pool of lipid carrier available.</text>
</comment>
<comment type="similarity">
    <text evidence="1">Belongs to the UppP family.</text>
</comment>
<name>UPPP2_BACC1</name>